<dbReference type="EC" id="1.5.1.40" evidence="2"/>
<dbReference type="EMBL" id="Y17210">
    <property type="protein sequence ID" value="CAA76687.1"/>
    <property type="molecule type" value="Genomic_DNA"/>
</dbReference>
<dbReference type="EMBL" id="CP001710">
    <property type="protein sequence ID" value="ADL58293.1"/>
    <property type="molecule type" value="Genomic_DNA"/>
</dbReference>
<dbReference type="PIR" id="T10120">
    <property type="entry name" value="T10120"/>
</dbReference>
<dbReference type="RefSeq" id="WP_013295517.1">
    <property type="nucleotide sequence ID" value="NC_014408.1"/>
</dbReference>
<dbReference type="SMR" id="D9PVP5"/>
<dbReference type="STRING" id="79929.MTBMA_c06980"/>
<dbReference type="PaxDb" id="79929-MTBMA_c06980"/>
<dbReference type="GeneID" id="41326378"/>
<dbReference type="GeneID" id="9704406"/>
<dbReference type="KEGG" id="mmg:MTBMA_c06980"/>
<dbReference type="PATRIC" id="fig|79929.8.peg.683"/>
<dbReference type="HOGENOM" id="CLU_076368_1_0_2"/>
<dbReference type="OrthoDB" id="8635at2157"/>
<dbReference type="BRENDA" id="1.5.1.40">
    <property type="organism ID" value="3256"/>
</dbReference>
<dbReference type="Proteomes" id="UP000000345">
    <property type="component" value="Chromosome"/>
</dbReference>
<dbReference type="GO" id="GO:0005886">
    <property type="term" value="C:plasma membrane"/>
    <property type="evidence" value="ECO:0007669"/>
    <property type="project" value="TreeGrafter"/>
</dbReference>
<dbReference type="GO" id="GO:0102261">
    <property type="term" value="F:8-hydroxy-5-deazaflavin:NADPH oxidoreductase activity"/>
    <property type="evidence" value="ECO:0007669"/>
    <property type="project" value="UniProtKB-EC"/>
</dbReference>
<dbReference type="GO" id="GO:0070967">
    <property type="term" value="F:coenzyme F420 binding"/>
    <property type="evidence" value="ECO:0000314"/>
    <property type="project" value="UniProtKB"/>
</dbReference>
<dbReference type="GO" id="GO:0008823">
    <property type="term" value="F:cupric reductase (NADH) activity"/>
    <property type="evidence" value="ECO:0007669"/>
    <property type="project" value="TreeGrafter"/>
</dbReference>
<dbReference type="GO" id="GO:0052851">
    <property type="term" value="F:ferric-chelate reductase (NADPH) activity"/>
    <property type="evidence" value="ECO:0007669"/>
    <property type="project" value="TreeGrafter"/>
</dbReference>
<dbReference type="GO" id="GO:0050661">
    <property type="term" value="F:NADP binding"/>
    <property type="evidence" value="ECO:0000314"/>
    <property type="project" value="UniProtKB"/>
</dbReference>
<dbReference type="GO" id="GO:0016651">
    <property type="term" value="F:oxidoreductase activity, acting on NAD(P)H"/>
    <property type="evidence" value="ECO:0000314"/>
    <property type="project" value="UniProtKB"/>
</dbReference>
<dbReference type="GO" id="GO:0015677">
    <property type="term" value="P:copper ion import"/>
    <property type="evidence" value="ECO:0007669"/>
    <property type="project" value="TreeGrafter"/>
</dbReference>
<dbReference type="GO" id="GO:0006740">
    <property type="term" value="P:NADPH regeneration"/>
    <property type="evidence" value="ECO:0000314"/>
    <property type="project" value="UniProtKB"/>
</dbReference>
<dbReference type="Gene3D" id="3.40.50.720">
    <property type="entry name" value="NAD(P)-binding Rossmann-like Domain"/>
    <property type="match status" value="1"/>
</dbReference>
<dbReference type="InterPro" id="IPR036291">
    <property type="entry name" value="NAD(P)-bd_dom_sf"/>
</dbReference>
<dbReference type="InterPro" id="IPR010185">
    <property type="entry name" value="NpdG"/>
</dbReference>
<dbReference type="InterPro" id="IPR028939">
    <property type="entry name" value="P5C_Rdtase_cat_N"/>
</dbReference>
<dbReference type="InterPro" id="IPR051267">
    <property type="entry name" value="STEAP_metalloreductase"/>
</dbReference>
<dbReference type="NCBIfam" id="TIGR01915">
    <property type="entry name" value="npdG"/>
    <property type="match status" value="1"/>
</dbReference>
<dbReference type="PANTHER" id="PTHR14239">
    <property type="entry name" value="DUDULIN-RELATED"/>
    <property type="match status" value="1"/>
</dbReference>
<dbReference type="PANTHER" id="PTHR14239:SF0">
    <property type="entry name" value="F420-DEPENDENT NADP REDUCTASE"/>
    <property type="match status" value="1"/>
</dbReference>
<dbReference type="Pfam" id="PF03807">
    <property type="entry name" value="F420_oxidored"/>
    <property type="match status" value="1"/>
</dbReference>
<dbReference type="SUPFAM" id="SSF51735">
    <property type="entry name" value="NAD(P)-binding Rossmann-fold domains"/>
    <property type="match status" value="1"/>
</dbReference>
<evidence type="ECO:0000250" key="1">
    <source>
        <dbReference type="UniProtKB" id="O29370"/>
    </source>
</evidence>
<evidence type="ECO:0000269" key="2">
    <source>
    </source>
</evidence>
<evidence type="ECO:0000303" key="3">
    <source>
    </source>
</evidence>
<evidence type="ECO:0000305" key="4"/>
<evidence type="ECO:0000305" key="5">
    <source>
    </source>
</evidence>
<reference key="1">
    <citation type="journal article" date="1998" name="FEBS Lett.">
        <title>F420H2:NADP oxidoreductase from Methanobacterium thermoautotrophicum: identification of the encoding gene via functional overexpression in Escherichia coli.</title>
        <authorList>
            <person name="Berk H."/>
            <person name="Thauer R.K."/>
        </authorList>
    </citation>
    <scope>NUCLEOTIDE SEQUENCE [GENOMIC DNA]</scope>
    <scope>FUNCTION</scope>
    <scope>CATALYTIC ACTIVITY</scope>
    <scope>GENE NAME</scope>
    <scope>SUBUNIT</scope>
    <scope>BIOPHYSICOCHEMICAL PROPERTIES</scope>
    <source>
        <strain>ATCC BAA-927 / DSM 2133 / JCM 14651 / NBRC 100331 / OCM 82 / Marburg</strain>
    </source>
</reference>
<reference key="2">
    <citation type="journal article" date="2010" name="J. Bacteriol.">
        <title>Complete genome sequence of Methanothermobacter marburgensis, a methanoarchaeon model organism.</title>
        <authorList>
            <person name="Liesegang H."/>
            <person name="Kaster A.K."/>
            <person name="Wiezer A."/>
            <person name="Goenrich M."/>
            <person name="Wollherr A."/>
            <person name="Seedorf H."/>
            <person name="Gottschalk G."/>
            <person name="Thauer R.K."/>
        </authorList>
    </citation>
    <scope>NUCLEOTIDE SEQUENCE [LARGE SCALE GENOMIC DNA]</scope>
    <source>
        <strain>ATCC BAA-927 / DSM 2133 / JCM 14651 / NBRC 100331 / OCM 82 / Marburg</strain>
    </source>
</reference>
<protein>
    <recommendedName>
        <fullName evidence="5">F420-dependent NADP reductase</fullName>
        <ecNumber evidence="2">1.5.1.40</ecNumber>
    </recommendedName>
    <alternativeName>
        <fullName evidence="3">F420H2:NADP oxidoreductase</fullName>
    </alternativeName>
</protein>
<feature type="chain" id="PRO_0000403984" description="F420-dependent NADP reductase">
    <location>
        <begin position="1"/>
        <end position="224"/>
    </location>
</feature>
<feature type="binding site" evidence="1">
    <location>
        <begin position="9"/>
        <end position="12"/>
    </location>
    <ligand>
        <name>NADP(+)</name>
        <dbReference type="ChEBI" id="CHEBI:58349"/>
    </ligand>
</feature>
<feature type="binding site" evidence="1">
    <location>
        <begin position="31"/>
        <end position="32"/>
    </location>
    <ligand>
        <name>NADP(+)</name>
        <dbReference type="ChEBI" id="CHEBI:58349"/>
    </ligand>
</feature>
<feature type="binding site" evidence="1">
    <location>
        <position position="36"/>
    </location>
    <ligand>
        <name>NADP(+)</name>
        <dbReference type="ChEBI" id="CHEBI:58349"/>
    </ligand>
</feature>
<feature type="binding site" evidence="1">
    <location>
        <position position="74"/>
    </location>
    <ligand>
        <name>NADP(+)</name>
        <dbReference type="ChEBI" id="CHEBI:58349"/>
    </ligand>
</feature>
<feature type="binding site" evidence="1">
    <location>
        <position position="100"/>
    </location>
    <ligand>
        <name>NADP(+)</name>
        <dbReference type="ChEBI" id="CHEBI:58349"/>
    </ligand>
</feature>
<feature type="binding site" evidence="1">
    <location>
        <position position="145"/>
    </location>
    <ligand>
        <name>NADP(+)</name>
        <dbReference type="ChEBI" id="CHEBI:58349"/>
    </ligand>
</feature>
<comment type="function">
    <text evidence="2">Catalyzes the reduction of NADP(+) with F420H(2) via hydride transfer, and the reverse reaction, i.e. the reduction of F420 with NADPH. Probably functions in the regeneration of NADPH required in biosynthetic reactions.</text>
</comment>
<comment type="catalytic activity">
    <reaction evidence="2">
        <text>reduced coenzyme F420-(gamma-L-Glu)(n) + NADP(+) = oxidized coenzyme F420-(gamma-L-Glu)(n) + NADPH + 2 H(+)</text>
        <dbReference type="Rhea" id="RHEA:31363"/>
        <dbReference type="Rhea" id="RHEA-COMP:12939"/>
        <dbReference type="Rhea" id="RHEA-COMP:14378"/>
        <dbReference type="ChEBI" id="CHEBI:15378"/>
        <dbReference type="ChEBI" id="CHEBI:57783"/>
        <dbReference type="ChEBI" id="CHEBI:58349"/>
        <dbReference type="ChEBI" id="CHEBI:133980"/>
        <dbReference type="ChEBI" id="CHEBI:139511"/>
        <dbReference type="EC" id="1.5.1.40"/>
    </reaction>
</comment>
<comment type="biophysicochemical properties">
    <kinetics>
        <KM evidence="2">0.3 mM for F420 (at pH 6.0)</KM>
        <KM evidence="2">50 uM for NADPH (at pH 6.0)</KM>
        <KM evidence="2">0.15 mM for F420H(2) (at pH 8.0)</KM>
        <KM evidence="2">70 uM for NADP(+) (at pH 8.0)</KM>
        <Vmax evidence="2">1500.0 umol/min/mg enzyme for F420 reduction with NADPH (at pH 6.0)</Vmax>
        <Vmax evidence="2">1100.0 umol/min/mg enzyme for NADP(+) reduction with F420H(2) (at pH 8.0)</Vmax>
    </kinetics>
    <phDependence>
        <text evidence="2">Optimum pH is 3.5 for F420 reduction with NADPH, and 8.0 for NADP(+) reduction with F420H(2).</text>
    </phDependence>
</comment>
<comment type="subunit">
    <text evidence="2">Homotetramer.</text>
</comment>
<comment type="similarity">
    <text evidence="4">Belongs to the F420-dependent NADP reductase family.</text>
</comment>
<keyword id="KW-0521">NADP</keyword>
<keyword id="KW-0560">Oxidoreductase</keyword>
<sequence length="224" mass="23448">MKIAVLGGTGDQGLGLALRLALAGEEVIIGSRDAEKAVSAAQKVLEIAERDDLKVKGATNAEAAEEAEVAILTVPLQAQMATLGSVKEAIKGKVLIDATVPIDSCLGGSAVRYIDLWDGSAAERAARFLEDQGTRVAAAFNNISASALLDITGPVDCDCLIASDHRDALDLASELAEKIDGVRAIDCGGLENARVIEKITPLLINLNIKNRIRNAGIRITNLPE</sequence>
<accession>D9PVP5</accession>
<accession>O59661</accession>
<gene>
    <name evidence="3" type="primary">fno</name>
    <name type="ordered locus">MTBMA_c06980</name>
</gene>
<proteinExistence type="evidence at protein level"/>
<name>FNO_METTM</name>
<organism>
    <name type="scientific">Methanothermobacter marburgensis (strain ATCC BAA-927 / DSM 2133 / JCM 14651 / NBRC 100331 / OCM 82 / Marburg)</name>
    <name type="common">Methanobacterium thermoautotrophicum</name>
    <dbReference type="NCBI Taxonomy" id="79929"/>
    <lineage>
        <taxon>Archaea</taxon>
        <taxon>Methanobacteriati</taxon>
        <taxon>Methanobacteriota</taxon>
        <taxon>Methanomada group</taxon>
        <taxon>Methanobacteria</taxon>
        <taxon>Methanobacteriales</taxon>
        <taxon>Methanobacteriaceae</taxon>
        <taxon>Methanothermobacter</taxon>
    </lineage>
</organism>